<protein>
    <recommendedName>
        <fullName evidence="2">Phosphate import ATP-binding protein PstB</fullName>
        <ecNumber evidence="2">7.3.2.1</ecNumber>
    </recommendedName>
    <alternativeName>
        <fullName evidence="2">ABC phosphate transporter</fullName>
    </alternativeName>
    <alternativeName>
        <fullName evidence="2">Phosphate-transporting ATPase</fullName>
    </alternativeName>
</protein>
<organism>
    <name type="scientific">Salmonella typhimurium (strain LT2 / SGSC1412 / ATCC 700720)</name>
    <dbReference type="NCBI Taxonomy" id="99287"/>
    <lineage>
        <taxon>Bacteria</taxon>
        <taxon>Pseudomonadati</taxon>
        <taxon>Pseudomonadota</taxon>
        <taxon>Gammaproteobacteria</taxon>
        <taxon>Enterobacterales</taxon>
        <taxon>Enterobacteriaceae</taxon>
        <taxon>Salmonella</taxon>
    </lineage>
</organism>
<gene>
    <name evidence="2" type="primary">pstB</name>
    <name type="ordered locus">STM3854</name>
</gene>
<dbReference type="EC" id="7.3.2.1" evidence="2"/>
<dbReference type="EMBL" id="AE006468">
    <property type="protein sequence ID" value="AAL22712.1"/>
    <property type="molecule type" value="Genomic_DNA"/>
</dbReference>
<dbReference type="RefSeq" id="NP_462753.1">
    <property type="nucleotide sequence ID" value="NC_003197.2"/>
</dbReference>
<dbReference type="RefSeq" id="WP_000063118.1">
    <property type="nucleotide sequence ID" value="NC_003197.2"/>
</dbReference>
<dbReference type="SMR" id="P63365"/>
<dbReference type="STRING" id="99287.STM3854"/>
<dbReference type="PaxDb" id="99287-STM3854"/>
<dbReference type="GeneID" id="1255381"/>
<dbReference type="GeneID" id="66758143"/>
<dbReference type="KEGG" id="stm:STM3854"/>
<dbReference type="PATRIC" id="fig|99287.12.peg.4083"/>
<dbReference type="HOGENOM" id="CLU_000604_1_22_6"/>
<dbReference type="OMA" id="TMSIYEN"/>
<dbReference type="PhylomeDB" id="P63365"/>
<dbReference type="BioCyc" id="SENT99287:STM3854-MONOMER"/>
<dbReference type="Proteomes" id="UP000001014">
    <property type="component" value="Chromosome"/>
</dbReference>
<dbReference type="GO" id="GO:0005886">
    <property type="term" value="C:plasma membrane"/>
    <property type="evidence" value="ECO:0007669"/>
    <property type="project" value="UniProtKB-SubCell"/>
</dbReference>
<dbReference type="GO" id="GO:0005524">
    <property type="term" value="F:ATP binding"/>
    <property type="evidence" value="ECO:0007669"/>
    <property type="project" value="UniProtKB-KW"/>
</dbReference>
<dbReference type="GO" id="GO:0016887">
    <property type="term" value="F:ATP hydrolysis activity"/>
    <property type="evidence" value="ECO:0007669"/>
    <property type="project" value="InterPro"/>
</dbReference>
<dbReference type="GO" id="GO:0015415">
    <property type="term" value="F:ATPase-coupled phosphate ion transmembrane transporter activity"/>
    <property type="evidence" value="ECO:0007669"/>
    <property type="project" value="UniProtKB-EC"/>
</dbReference>
<dbReference type="GO" id="GO:0035435">
    <property type="term" value="P:phosphate ion transmembrane transport"/>
    <property type="evidence" value="ECO:0007669"/>
    <property type="project" value="InterPro"/>
</dbReference>
<dbReference type="CDD" id="cd03260">
    <property type="entry name" value="ABC_PstB_phosphate_transporter"/>
    <property type="match status" value="1"/>
</dbReference>
<dbReference type="FunFam" id="3.40.50.300:FF:000132">
    <property type="entry name" value="Phosphate import ATP-binding protein PstB"/>
    <property type="match status" value="1"/>
</dbReference>
<dbReference type="Gene3D" id="3.40.50.300">
    <property type="entry name" value="P-loop containing nucleotide triphosphate hydrolases"/>
    <property type="match status" value="1"/>
</dbReference>
<dbReference type="InterPro" id="IPR003593">
    <property type="entry name" value="AAA+_ATPase"/>
</dbReference>
<dbReference type="InterPro" id="IPR003439">
    <property type="entry name" value="ABC_transporter-like_ATP-bd"/>
</dbReference>
<dbReference type="InterPro" id="IPR017871">
    <property type="entry name" value="ABC_transporter-like_CS"/>
</dbReference>
<dbReference type="InterPro" id="IPR027417">
    <property type="entry name" value="P-loop_NTPase"/>
</dbReference>
<dbReference type="InterPro" id="IPR005670">
    <property type="entry name" value="PstB-like"/>
</dbReference>
<dbReference type="NCBIfam" id="TIGR00972">
    <property type="entry name" value="3a0107s01c2"/>
    <property type="match status" value="1"/>
</dbReference>
<dbReference type="PANTHER" id="PTHR43423">
    <property type="entry name" value="ABC TRANSPORTER I FAMILY MEMBER 17"/>
    <property type="match status" value="1"/>
</dbReference>
<dbReference type="PANTHER" id="PTHR43423:SF3">
    <property type="entry name" value="PHOSPHATE IMPORT ATP-BINDING PROTEIN PSTB"/>
    <property type="match status" value="1"/>
</dbReference>
<dbReference type="Pfam" id="PF00005">
    <property type="entry name" value="ABC_tran"/>
    <property type="match status" value="1"/>
</dbReference>
<dbReference type="SMART" id="SM00382">
    <property type="entry name" value="AAA"/>
    <property type="match status" value="1"/>
</dbReference>
<dbReference type="SUPFAM" id="SSF52540">
    <property type="entry name" value="P-loop containing nucleoside triphosphate hydrolases"/>
    <property type="match status" value="1"/>
</dbReference>
<dbReference type="PROSITE" id="PS00211">
    <property type="entry name" value="ABC_TRANSPORTER_1"/>
    <property type="match status" value="1"/>
</dbReference>
<dbReference type="PROSITE" id="PS50893">
    <property type="entry name" value="ABC_TRANSPORTER_2"/>
    <property type="match status" value="1"/>
</dbReference>
<dbReference type="PROSITE" id="PS51238">
    <property type="entry name" value="PSTB"/>
    <property type="match status" value="1"/>
</dbReference>
<proteinExistence type="inferred from homology"/>
<feature type="initiator methionine" description="Removed" evidence="1">
    <location>
        <position position="1"/>
    </location>
</feature>
<feature type="chain" id="PRO_0000092873" description="Phosphate import ATP-binding protein PstB">
    <location>
        <begin position="2"/>
        <end position="257"/>
    </location>
</feature>
<feature type="domain" description="ABC transporter" evidence="2">
    <location>
        <begin position="11"/>
        <end position="252"/>
    </location>
</feature>
<feature type="binding site" evidence="2">
    <location>
        <begin position="43"/>
        <end position="50"/>
    </location>
    <ligand>
        <name>ATP</name>
        <dbReference type="ChEBI" id="CHEBI:30616"/>
    </ligand>
</feature>
<sequence length="257" mass="29016">MSMVETAPSKIQVRDLNFYYGKFHALKNINLDIAKNQVTAFIGPSGCGKSTLLRTFNKMYSLYPEQRAEGEILLDGDNILTNTQDIALLRAKVGMVFQKPTPFPMSIYDNIAFGVRLFEKLSRADMDERVQWALTKAALWNETKDKLHQSGYSLSGGQQQRLCIARGIAIRPEVLLLDEPCSALDPISTGRIEELITELKQDYTVVIVTHNMQQAARCSDHTAFMYLGELIEFSNTDDLFTKPAKKQTEDYITGRYG</sequence>
<keyword id="KW-0067">ATP-binding</keyword>
<keyword id="KW-0997">Cell inner membrane</keyword>
<keyword id="KW-1003">Cell membrane</keyword>
<keyword id="KW-0472">Membrane</keyword>
<keyword id="KW-0547">Nucleotide-binding</keyword>
<keyword id="KW-0592">Phosphate transport</keyword>
<keyword id="KW-1185">Reference proteome</keyword>
<keyword id="KW-1278">Translocase</keyword>
<keyword id="KW-0813">Transport</keyword>
<accession>P63365</accession>
<accession>P58656</accession>
<accession>P58657</accession>
<comment type="function">
    <text evidence="2">Part of the ABC transporter complex PstSACB involved in phosphate import. Responsible for energy coupling to the transport system.</text>
</comment>
<comment type="catalytic activity">
    <reaction evidence="2">
        <text>phosphate(out) + ATP + H2O = ADP + 2 phosphate(in) + H(+)</text>
        <dbReference type="Rhea" id="RHEA:24440"/>
        <dbReference type="ChEBI" id="CHEBI:15377"/>
        <dbReference type="ChEBI" id="CHEBI:15378"/>
        <dbReference type="ChEBI" id="CHEBI:30616"/>
        <dbReference type="ChEBI" id="CHEBI:43474"/>
        <dbReference type="ChEBI" id="CHEBI:456216"/>
        <dbReference type="EC" id="7.3.2.1"/>
    </reaction>
</comment>
<comment type="subunit">
    <text evidence="2">The complex is composed of two ATP-binding proteins (PstB), two transmembrane proteins (PstC and PstA) and a solute-binding protein (PstS).</text>
</comment>
<comment type="subcellular location">
    <subcellularLocation>
        <location evidence="2">Cell inner membrane</location>
        <topology evidence="2">Peripheral membrane protein</topology>
    </subcellularLocation>
</comment>
<comment type="similarity">
    <text evidence="2">Belongs to the ABC transporter superfamily. Phosphate importer (TC 3.A.1.7) family.</text>
</comment>
<evidence type="ECO:0000250" key="1"/>
<evidence type="ECO:0000255" key="2">
    <source>
        <dbReference type="HAMAP-Rule" id="MF_01702"/>
    </source>
</evidence>
<reference key="1">
    <citation type="journal article" date="2001" name="Nature">
        <title>Complete genome sequence of Salmonella enterica serovar Typhimurium LT2.</title>
        <authorList>
            <person name="McClelland M."/>
            <person name="Sanderson K.E."/>
            <person name="Spieth J."/>
            <person name="Clifton S.W."/>
            <person name="Latreille P."/>
            <person name="Courtney L."/>
            <person name="Porwollik S."/>
            <person name="Ali J."/>
            <person name="Dante M."/>
            <person name="Du F."/>
            <person name="Hou S."/>
            <person name="Layman D."/>
            <person name="Leonard S."/>
            <person name="Nguyen C."/>
            <person name="Scott K."/>
            <person name="Holmes A."/>
            <person name="Grewal N."/>
            <person name="Mulvaney E."/>
            <person name="Ryan E."/>
            <person name="Sun H."/>
            <person name="Florea L."/>
            <person name="Miller W."/>
            <person name="Stoneking T."/>
            <person name="Nhan M."/>
            <person name="Waterston R."/>
            <person name="Wilson R.K."/>
        </authorList>
    </citation>
    <scope>NUCLEOTIDE SEQUENCE [LARGE SCALE GENOMIC DNA]</scope>
    <source>
        <strain>LT2 / SGSC1412 / ATCC 700720</strain>
    </source>
</reference>
<name>PSTB_SALTY</name>